<feature type="chain" id="PRO_0000245467" description="3-hydroxyanthranilate 3,4-dioxygenase">
    <location>
        <begin position="1"/>
        <end position="282"/>
    </location>
</feature>
<feature type="region of interest" description="Domain A (catalytic)" evidence="1">
    <location>
        <begin position="1"/>
        <end position="160"/>
    </location>
</feature>
<feature type="region of interest" description="Linker" evidence="1">
    <location>
        <begin position="161"/>
        <end position="177"/>
    </location>
</feature>
<feature type="region of interest" description="Domain B" evidence="1">
    <location>
        <begin position="178"/>
        <end position="282"/>
    </location>
</feature>
<feature type="binding site" evidence="1">
    <location>
        <position position="43"/>
    </location>
    <ligand>
        <name>O2</name>
        <dbReference type="ChEBI" id="CHEBI:15379"/>
    </ligand>
</feature>
<feature type="binding site" evidence="1">
    <location>
        <position position="47"/>
    </location>
    <ligand>
        <name>Fe cation</name>
        <dbReference type="ChEBI" id="CHEBI:24875"/>
        <note>catalytic</note>
    </ligand>
</feature>
<feature type="binding site" evidence="1">
    <location>
        <position position="53"/>
    </location>
    <ligand>
        <name>Fe cation</name>
        <dbReference type="ChEBI" id="CHEBI:24875"/>
        <note>catalytic</note>
    </ligand>
</feature>
<feature type="binding site" evidence="1">
    <location>
        <position position="53"/>
    </location>
    <ligand>
        <name>substrate</name>
    </ligand>
</feature>
<feature type="binding site" evidence="1">
    <location>
        <position position="91"/>
    </location>
    <ligand>
        <name>Fe cation</name>
        <dbReference type="ChEBI" id="CHEBI:24875"/>
        <note>catalytic</note>
    </ligand>
</feature>
<feature type="binding site" evidence="1">
    <location>
        <position position="95"/>
    </location>
    <ligand>
        <name>substrate</name>
    </ligand>
</feature>
<feature type="binding site" evidence="1">
    <location>
        <position position="105"/>
    </location>
    <ligand>
        <name>substrate</name>
    </ligand>
</feature>
<gene>
    <name type="primary">haao</name>
</gene>
<evidence type="ECO:0000255" key="1">
    <source>
        <dbReference type="HAMAP-Rule" id="MF_03019"/>
    </source>
</evidence>
<protein>
    <recommendedName>
        <fullName evidence="1">3-hydroxyanthranilate 3,4-dioxygenase</fullName>
        <ecNumber evidence="1">1.13.11.6</ecNumber>
    </recommendedName>
    <alternativeName>
        <fullName evidence="1">3-hydroxyanthranilate oxygenase</fullName>
        <shortName evidence="1">3-HAO</shortName>
    </alternativeName>
    <alternativeName>
        <fullName evidence="1">3-hydroxyanthranilic acid dioxygenase</fullName>
        <shortName evidence="1">HAD</shortName>
    </alternativeName>
</protein>
<comment type="function">
    <text evidence="1">Catalyzes the oxidative ring opening of 3-hydroxyanthranilate to 2-amino-3-carboxymuconate semialdehyde, which spontaneously cyclizes to quinolinate.</text>
</comment>
<comment type="catalytic activity">
    <reaction evidence="1">
        <text>3-hydroxyanthranilate + O2 = (2Z,4Z)-2-amino-3-carboxymuconate 6-semialdehyde</text>
        <dbReference type="Rhea" id="RHEA:17953"/>
        <dbReference type="ChEBI" id="CHEBI:15379"/>
        <dbReference type="ChEBI" id="CHEBI:36559"/>
        <dbReference type="ChEBI" id="CHEBI:77612"/>
        <dbReference type="EC" id="1.13.11.6"/>
    </reaction>
</comment>
<comment type="cofactor">
    <cofactor evidence="1">
        <name>Fe(2+)</name>
        <dbReference type="ChEBI" id="CHEBI:29033"/>
    </cofactor>
</comment>
<comment type="pathway">
    <text evidence="1">Cofactor biosynthesis; NAD(+) biosynthesis; quinolinate from L-kynurenine: step 3/3.</text>
</comment>
<comment type="subunit">
    <text evidence="1">Monomer.</text>
</comment>
<comment type="subcellular location">
    <subcellularLocation>
        <location evidence="1">Cytoplasm</location>
        <location evidence="1">Cytosol</location>
    </subcellularLocation>
</comment>
<comment type="similarity">
    <text evidence="1">Belongs to the 3-HAO family.</text>
</comment>
<organism>
    <name type="scientific">Xenopus laevis</name>
    <name type="common">African clawed frog</name>
    <dbReference type="NCBI Taxonomy" id="8355"/>
    <lineage>
        <taxon>Eukaryota</taxon>
        <taxon>Metazoa</taxon>
        <taxon>Chordata</taxon>
        <taxon>Craniata</taxon>
        <taxon>Vertebrata</taxon>
        <taxon>Euteleostomi</taxon>
        <taxon>Amphibia</taxon>
        <taxon>Batrachia</taxon>
        <taxon>Anura</taxon>
        <taxon>Pipoidea</taxon>
        <taxon>Pipidae</taxon>
        <taxon>Xenopodinae</taxon>
        <taxon>Xenopus</taxon>
        <taxon>Xenopus</taxon>
    </lineage>
</organism>
<sequence>MAMAINVKKWIEENTEYFLPPVCNKLMHNQQLKVMFVGGPNQRKDYHIEEGEELFYQVEGDMCLKIVENGKHKDVHIKQGEMFLLPGRIPHSPQRYADTVGLVFERRRLDTEKDGLRFYVEGSPEVLFEQWFYCEDLGTQLAPIMKEFFSSKQYKSGKPDPDQPKAKMPFCLSTEQVMEPFSFQHWLNKHRLEIIQKKCVSLFGDDHETKAVIYGGGESKQSKAQTDVWIWQLEGTSHVTLGNEVLKLGSGDSLLVPEETLFSWTREDGSIALSTSQVPLPM</sequence>
<keyword id="KW-0963">Cytoplasm</keyword>
<keyword id="KW-0223">Dioxygenase</keyword>
<keyword id="KW-0408">Iron</keyword>
<keyword id="KW-0479">Metal-binding</keyword>
<keyword id="KW-0560">Oxidoreductase</keyword>
<keyword id="KW-0662">Pyridine nucleotide biosynthesis</keyword>
<keyword id="KW-1185">Reference proteome</keyword>
<name>3HAO_XENLA</name>
<dbReference type="EC" id="1.13.11.6" evidence="1"/>
<dbReference type="EMBL" id="BC061663">
    <property type="protein sequence ID" value="AAH61663.1"/>
    <property type="molecule type" value="mRNA"/>
</dbReference>
<dbReference type="RefSeq" id="NP_001083573.1">
    <property type="nucleotide sequence ID" value="NM_001090104.1"/>
</dbReference>
<dbReference type="SMR" id="Q6P7I0"/>
<dbReference type="DNASU" id="398998"/>
<dbReference type="GeneID" id="398998"/>
<dbReference type="KEGG" id="xla:398998"/>
<dbReference type="AGR" id="Xenbase:XB-GENE-6254902"/>
<dbReference type="CTD" id="398998"/>
<dbReference type="Xenbase" id="XB-GENE-6254902">
    <property type="gene designation" value="haao.L"/>
</dbReference>
<dbReference type="OrthoDB" id="204928at2759"/>
<dbReference type="UniPathway" id="UPA00253">
    <property type="reaction ID" value="UER00330"/>
</dbReference>
<dbReference type="Proteomes" id="UP000186698">
    <property type="component" value="Chromosome 5L"/>
</dbReference>
<dbReference type="Bgee" id="398998">
    <property type="expression patterns" value="Expressed in kidney and 19 other cell types or tissues"/>
</dbReference>
<dbReference type="GO" id="GO:0005737">
    <property type="term" value="C:cytoplasm"/>
    <property type="evidence" value="ECO:0000318"/>
    <property type="project" value="GO_Central"/>
</dbReference>
<dbReference type="GO" id="GO:0005829">
    <property type="term" value="C:cytosol"/>
    <property type="evidence" value="ECO:0007669"/>
    <property type="project" value="UniProtKB-SubCell"/>
</dbReference>
<dbReference type="GO" id="GO:0000334">
    <property type="term" value="F:3-hydroxyanthranilate 3,4-dioxygenase activity"/>
    <property type="evidence" value="ECO:0000250"/>
    <property type="project" value="UniProtKB"/>
</dbReference>
<dbReference type="GO" id="GO:0008198">
    <property type="term" value="F:ferrous iron binding"/>
    <property type="evidence" value="ECO:0000250"/>
    <property type="project" value="UniProtKB"/>
</dbReference>
<dbReference type="GO" id="GO:0034354">
    <property type="term" value="P:'de novo' NAD biosynthetic process from L-tryptophan"/>
    <property type="evidence" value="ECO:0000318"/>
    <property type="project" value="GO_Central"/>
</dbReference>
<dbReference type="GO" id="GO:0043420">
    <property type="term" value="P:anthranilate metabolic process"/>
    <property type="evidence" value="ECO:0007669"/>
    <property type="project" value="UniProtKB-UniRule"/>
</dbReference>
<dbReference type="GO" id="GO:0006569">
    <property type="term" value="P:L-tryptophan catabolic process"/>
    <property type="evidence" value="ECO:0007669"/>
    <property type="project" value="UniProtKB-UniRule"/>
</dbReference>
<dbReference type="GO" id="GO:0009435">
    <property type="term" value="P:NAD biosynthetic process"/>
    <property type="evidence" value="ECO:0000250"/>
    <property type="project" value="UniProtKB"/>
</dbReference>
<dbReference type="GO" id="GO:0019805">
    <property type="term" value="P:quinolinate biosynthetic process"/>
    <property type="evidence" value="ECO:0000250"/>
    <property type="project" value="UniProtKB"/>
</dbReference>
<dbReference type="GO" id="GO:0046874">
    <property type="term" value="P:quinolinate metabolic process"/>
    <property type="evidence" value="ECO:0000318"/>
    <property type="project" value="GO_Central"/>
</dbReference>
<dbReference type="CDD" id="cd06123">
    <property type="entry name" value="cupin_HAO"/>
    <property type="match status" value="1"/>
</dbReference>
<dbReference type="FunFam" id="2.60.120.10:FF:000077">
    <property type="entry name" value="3-hydroxyanthranilate 3,4-dioxygenase"/>
    <property type="match status" value="1"/>
</dbReference>
<dbReference type="Gene3D" id="2.60.120.10">
    <property type="entry name" value="Jelly Rolls"/>
    <property type="match status" value="1"/>
</dbReference>
<dbReference type="HAMAP" id="MF_00825">
    <property type="entry name" value="3_HAO"/>
    <property type="match status" value="1"/>
</dbReference>
<dbReference type="InterPro" id="IPR010329">
    <property type="entry name" value="3hydroanth_dOase"/>
</dbReference>
<dbReference type="InterPro" id="IPR016700">
    <property type="entry name" value="3hydroanth_dOase_met"/>
</dbReference>
<dbReference type="InterPro" id="IPR014710">
    <property type="entry name" value="RmlC-like_jellyroll"/>
</dbReference>
<dbReference type="InterPro" id="IPR011051">
    <property type="entry name" value="RmlC_Cupin_sf"/>
</dbReference>
<dbReference type="NCBIfam" id="TIGR03037">
    <property type="entry name" value="anthran_nbaC"/>
    <property type="match status" value="1"/>
</dbReference>
<dbReference type="PANTHER" id="PTHR15497">
    <property type="entry name" value="3-HYDROXYANTHRANILATE 3,4-DIOXYGENASE"/>
    <property type="match status" value="1"/>
</dbReference>
<dbReference type="PANTHER" id="PTHR15497:SF1">
    <property type="entry name" value="3-HYDROXYANTHRANILATE 3,4-DIOXYGENASE"/>
    <property type="match status" value="1"/>
</dbReference>
<dbReference type="Pfam" id="PF06052">
    <property type="entry name" value="3-HAO"/>
    <property type="match status" value="1"/>
</dbReference>
<dbReference type="PIRSF" id="PIRSF017681">
    <property type="entry name" value="3hydroanth_dOase_animal"/>
    <property type="match status" value="1"/>
</dbReference>
<dbReference type="SUPFAM" id="SSF51182">
    <property type="entry name" value="RmlC-like cupins"/>
    <property type="match status" value="2"/>
</dbReference>
<reference key="1">
    <citation type="submission" date="2003-11" db="EMBL/GenBank/DDBJ databases">
        <authorList>
            <consortium name="NIH - Xenopus Gene Collection (XGC) project"/>
        </authorList>
    </citation>
    <scope>NUCLEOTIDE SEQUENCE [LARGE SCALE MRNA]</scope>
    <source>
        <tissue>Kidney</tissue>
    </source>
</reference>
<accession>Q6P7I0</accession>
<proteinExistence type="evidence at transcript level"/>